<proteinExistence type="evidence at protein level"/>
<feature type="chain" id="PRO_0000111935" description="ATP-dependent 6-phosphofructokinase">
    <location>
        <begin position="1"/>
        <end position="319"/>
    </location>
</feature>
<feature type="active site" description="Proton acceptor" evidence="1">
    <location>
        <position position="127"/>
    </location>
</feature>
<feature type="binding site" evidence="1">
    <location>
        <position position="11"/>
    </location>
    <ligand>
        <name>ATP</name>
        <dbReference type="ChEBI" id="CHEBI:30616"/>
    </ligand>
</feature>
<feature type="binding site" evidence="1 5">
    <location>
        <begin position="21"/>
        <end position="25"/>
    </location>
    <ligand>
        <name>ADP</name>
        <dbReference type="ChEBI" id="CHEBI:456216"/>
        <note>allosteric activator; ligand shared between dimeric partners</note>
    </ligand>
</feature>
<feature type="binding site" evidence="1 5">
    <location>
        <position position="59"/>
    </location>
    <ligand>
        <name>ADP</name>
        <dbReference type="ChEBI" id="CHEBI:456216"/>
        <note>allosteric activator; ligand shared between dimeric partners</note>
    </ligand>
</feature>
<feature type="binding site" evidence="1 5">
    <location>
        <begin position="72"/>
        <end position="73"/>
    </location>
    <ligand>
        <name>ATP</name>
        <dbReference type="ChEBI" id="CHEBI:30616"/>
    </ligand>
</feature>
<feature type="binding site" evidence="1">
    <location>
        <begin position="102"/>
        <end position="105"/>
    </location>
    <ligand>
        <name>ATP</name>
        <dbReference type="ChEBI" id="CHEBI:30616"/>
    </ligand>
</feature>
<feature type="binding site" evidence="1 5">
    <location>
        <position position="103"/>
    </location>
    <ligand>
        <name>Mg(2+)</name>
        <dbReference type="ChEBI" id="CHEBI:18420"/>
        <note>catalytic</note>
    </ligand>
</feature>
<feature type="binding site" description="in other chain" evidence="1 2 5">
    <location>
        <begin position="125"/>
        <end position="127"/>
    </location>
    <ligand>
        <name>substrate</name>
        <note>ligand shared between dimeric partners</note>
    </ligand>
</feature>
<feature type="binding site" description="in other chain" evidence="1 5">
    <location>
        <position position="154"/>
    </location>
    <ligand>
        <name>ADP</name>
        <dbReference type="ChEBI" id="CHEBI:456216"/>
        <note>allosteric activator; ligand shared between dimeric partners</note>
    </ligand>
</feature>
<feature type="binding site" evidence="1 5">
    <location>
        <position position="162"/>
    </location>
    <ligand>
        <name>substrate</name>
        <note>ligand shared between dimeric partners</note>
    </ligand>
</feature>
<feature type="binding site" description="in other chain" evidence="1 2 5">
    <location>
        <begin position="169"/>
        <end position="171"/>
    </location>
    <ligand>
        <name>substrate</name>
        <note>ligand shared between dimeric partners</note>
    </ligand>
</feature>
<feature type="binding site" description="in other chain" evidence="1 5">
    <location>
        <begin position="185"/>
        <end position="187"/>
    </location>
    <ligand>
        <name>ADP</name>
        <dbReference type="ChEBI" id="CHEBI:456216"/>
        <note>allosteric activator; ligand shared between dimeric partners</note>
    </ligand>
</feature>
<feature type="binding site" description="in other chain" evidence="1 5">
    <location>
        <position position="211"/>
    </location>
    <ligand>
        <name>ADP</name>
        <dbReference type="ChEBI" id="CHEBI:456216"/>
        <note>allosteric activator; ligand shared between dimeric partners</note>
    </ligand>
</feature>
<feature type="binding site" description="in other chain" evidence="1 5">
    <location>
        <begin position="213"/>
        <end position="215"/>
    </location>
    <ligand>
        <name>ADP</name>
        <dbReference type="ChEBI" id="CHEBI:456216"/>
        <note>allosteric activator; ligand shared between dimeric partners</note>
    </ligand>
</feature>
<feature type="binding site" description="in other chain" evidence="1 2 5">
    <location>
        <position position="222"/>
    </location>
    <ligand>
        <name>substrate</name>
        <note>ligand shared between dimeric partners</note>
    </ligand>
</feature>
<feature type="binding site" evidence="1 2 5">
    <location>
        <position position="243"/>
    </location>
    <ligand>
        <name>substrate</name>
        <note>ligand shared between dimeric partners</note>
    </ligand>
</feature>
<feature type="binding site" description="in other chain" evidence="1 2 5">
    <location>
        <begin position="249"/>
        <end position="252"/>
    </location>
    <ligand>
        <name>substrate</name>
        <note>ligand shared between dimeric partners</note>
    </ligand>
</feature>
<feature type="sequence conflict" description="In Ref. 2; AA sequence." evidence="7" ref="2">
    <original>D</original>
    <variation>N</variation>
    <location>
        <position position="12"/>
    </location>
</feature>
<feature type="sequence conflict" description="In Ref. 2; AA sequence." evidence="7" ref="2">
    <location>
        <begin position="35"/>
        <end position="37"/>
    </location>
</feature>
<feature type="sequence conflict" description="In Ref. 2; AA sequence." evidence="7" ref="2">
    <original>G</original>
    <variation>V</variation>
    <location>
        <position position="43"/>
    </location>
</feature>
<feature type="sequence conflict" description="In Ref. 2; AA sequence." evidence="7" ref="2">
    <original>Q</original>
    <variation>E</variation>
    <location>
        <position position="82"/>
    </location>
</feature>
<feature type="sequence conflict" description="In Ref. 2; AA sequence." evidence="7" ref="2">
    <original>E</original>
    <variation>Q</variation>
    <location>
        <position position="95"/>
    </location>
</feature>
<feature type="sequence conflict" description="In Ref. 2; AA sequence." evidence="7" ref="2">
    <original>G</original>
    <variation>L</variation>
    <location>
        <position position="225"/>
    </location>
</feature>
<feature type="strand" evidence="10">
    <location>
        <begin position="3"/>
        <end position="11"/>
    </location>
</feature>
<feature type="helix" evidence="10">
    <location>
        <begin position="16"/>
        <end position="29"/>
    </location>
</feature>
<feature type="strand" evidence="10">
    <location>
        <begin position="33"/>
        <end position="37"/>
    </location>
</feature>
<feature type="helix" evidence="10">
    <location>
        <begin position="40"/>
        <end position="46"/>
    </location>
</feature>
<feature type="strand" evidence="10">
    <location>
        <begin position="49"/>
        <end position="52"/>
    </location>
</feature>
<feature type="helix" evidence="10">
    <location>
        <begin position="54"/>
        <end position="57"/>
    </location>
</feature>
<feature type="helix" evidence="10">
    <location>
        <begin position="74"/>
        <end position="77"/>
    </location>
</feature>
<feature type="helix" evidence="10">
    <location>
        <begin position="81"/>
        <end position="91"/>
    </location>
</feature>
<feature type="strand" evidence="10">
    <location>
        <begin position="97"/>
        <end position="102"/>
    </location>
</feature>
<feature type="helix" evidence="10">
    <location>
        <begin position="103"/>
        <end position="114"/>
    </location>
</feature>
<feature type="strand" evidence="10">
    <location>
        <begin position="119"/>
        <end position="127"/>
    </location>
</feature>
<feature type="helix" evidence="10">
    <location>
        <begin position="139"/>
        <end position="153"/>
    </location>
</feature>
<feature type="strand" evidence="10">
    <location>
        <begin position="159"/>
        <end position="168"/>
    </location>
</feature>
<feature type="helix" evidence="10">
    <location>
        <begin position="175"/>
        <end position="183"/>
    </location>
</feature>
<feature type="strand" evidence="10">
    <location>
        <begin position="187"/>
        <end position="190"/>
    </location>
</feature>
<feature type="helix" evidence="10">
    <location>
        <begin position="198"/>
        <end position="210"/>
    </location>
</feature>
<feature type="strand" evidence="10">
    <location>
        <begin position="216"/>
        <end position="221"/>
    </location>
</feature>
<feature type="turn" evidence="10">
    <location>
        <begin position="222"/>
        <end position="224"/>
    </location>
</feature>
<feature type="helix" evidence="10">
    <location>
        <begin position="227"/>
        <end position="238"/>
    </location>
</feature>
<feature type="strand" evidence="10">
    <location>
        <begin position="241"/>
        <end position="246"/>
    </location>
</feature>
<feature type="helix" evidence="10">
    <location>
        <begin position="248"/>
        <end position="252"/>
    </location>
</feature>
<feature type="helix" evidence="10">
    <location>
        <begin position="258"/>
        <end position="277"/>
    </location>
</feature>
<feature type="strand" evidence="10">
    <location>
        <begin position="281"/>
        <end position="287"/>
    </location>
</feature>
<feature type="strand" evidence="10">
    <location>
        <begin position="290"/>
        <end position="295"/>
    </location>
</feature>
<feature type="helix" evidence="10">
    <location>
        <begin position="296"/>
        <end position="300"/>
    </location>
</feature>
<feature type="helix" evidence="10">
    <location>
        <begin position="308"/>
        <end position="317"/>
    </location>
</feature>
<organism>
    <name type="scientific">Geobacillus stearothermophilus</name>
    <name type="common">Bacillus stearothermophilus</name>
    <dbReference type="NCBI Taxonomy" id="1422"/>
    <lineage>
        <taxon>Bacteria</taxon>
        <taxon>Bacillati</taxon>
        <taxon>Bacillota</taxon>
        <taxon>Bacilli</taxon>
        <taxon>Bacillales</taxon>
        <taxon>Anoxybacillaceae</taxon>
        <taxon>Geobacillus</taxon>
    </lineage>
</organism>
<name>PFKA_GEOSE</name>
<evidence type="ECO:0000255" key="1">
    <source>
        <dbReference type="HAMAP-Rule" id="MF_00339"/>
    </source>
</evidence>
<evidence type="ECO:0000269" key="2">
    <source>
    </source>
</evidence>
<evidence type="ECO:0000269" key="3">
    <source>
    </source>
</evidence>
<evidence type="ECO:0000269" key="4">
    <source>
    </source>
</evidence>
<evidence type="ECO:0000269" key="5">
    <source>
    </source>
</evidence>
<evidence type="ECO:0000269" key="6">
    <source>
    </source>
</evidence>
<evidence type="ECO:0000305" key="7"/>
<evidence type="ECO:0000305" key="8">
    <source>
    </source>
</evidence>
<evidence type="ECO:0000305" key="9">
    <source>
    </source>
</evidence>
<evidence type="ECO:0007829" key="10">
    <source>
        <dbReference type="PDB" id="4I7E"/>
    </source>
</evidence>
<dbReference type="EC" id="2.7.1.11" evidence="1"/>
<dbReference type="EMBL" id="M15643">
    <property type="protein sequence ID" value="AAA22656.1"/>
    <property type="molecule type" value="Genomic_DNA"/>
</dbReference>
<dbReference type="EMBL" id="D13095">
    <property type="protein sequence ID" value="BAA02405.1"/>
    <property type="molecule type" value="Genomic_DNA"/>
</dbReference>
<dbReference type="PIR" id="A27474">
    <property type="entry name" value="KIBSFF"/>
</dbReference>
<dbReference type="RefSeq" id="WP_033014452.1">
    <property type="nucleotide sequence ID" value="NZ_RCTK01000004.1"/>
</dbReference>
<dbReference type="PDB" id="1MTO">
    <property type="method" value="X-ray"/>
    <property type="resolution" value="3.20 A"/>
    <property type="chains" value="A/B/C/D/E/F/G/H=1-319"/>
</dbReference>
<dbReference type="PDB" id="3PFK">
    <property type="method" value="X-ray"/>
    <property type="resolution" value="2.40 A"/>
    <property type="chains" value="A=1-319"/>
</dbReference>
<dbReference type="PDB" id="3U39">
    <property type="method" value="X-ray"/>
    <property type="resolution" value="2.79 A"/>
    <property type="chains" value="A/B/C/D=1-319"/>
</dbReference>
<dbReference type="PDB" id="4I36">
    <property type="method" value="X-ray"/>
    <property type="resolution" value="2.30 A"/>
    <property type="chains" value="A/B/C/D=1-319"/>
</dbReference>
<dbReference type="PDB" id="4I4I">
    <property type="method" value="X-ray"/>
    <property type="resolution" value="2.49 A"/>
    <property type="chains" value="A/B/C/D=1-319"/>
</dbReference>
<dbReference type="PDB" id="4I7E">
    <property type="method" value="X-ray"/>
    <property type="resolution" value="2.00 A"/>
    <property type="chains" value="A/B/C/D=1-319"/>
</dbReference>
<dbReference type="PDB" id="4PFK">
    <property type="method" value="X-ray"/>
    <property type="resolution" value="2.40 A"/>
    <property type="chains" value="A=1-319"/>
</dbReference>
<dbReference type="PDB" id="6PFK">
    <property type="method" value="X-ray"/>
    <property type="resolution" value="2.60 A"/>
    <property type="chains" value="A/B/C/D=1-319"/>
</dbReference>
<dbReference type="PDBsum" id="1MTO"/>
<dbReference type="PDBsum" id="3PFK"/>
<dbReference type="PDBsum" id="3U39"/>
<dbReference type="PDBsum" id="4I36"/>
<dbReference type="PDBsum" id="4I4I"/>
<dbReference type="PDBsum" id="4I7E"/>
<dbReference type="PDBsum" id="4PFK"/>
<dbReference type="PDBsum" id="6PFK"/>
<dbReference type="SMR" id="P00512"/>
<dbReference type="DrugBank" id="DB02726">
    <property type="generic name" value="2-Phosphoglycolic Acid"/>
</dbReference>
<dbReference type="DrugBank" id="DB04493">
    <property type="generic name" value="Fructose-6-phosphate"/>
</dbReference>
<dbReference type="DrugBank" id="DB09344">
    <property type="generic name" value="Invert sugar"/>
</dbReference>
<dbReference type="GeneID" id="89612055"/>
<dbReference type="OrthoDB" id="9802503at2"/>
<dbReference type="BRENDA" id="2.7.1.11">
    <property type="organism ID" value="623"/>
</dbReference>
<dbReference type="SABIO-RK" id="P00512"/>
<dbReference type="UniPathway" id="UPA00109">
    <property type="reaction ID" value="UER00182"/>
</dbReference>
<dbReference type="EvolutionaryTrace" id="P00512"/>
<dbReference type="GO" id="GO:0005945">
    <property type="term" value="C:6-phosphofructokinase complex"/>
    <property type="evidence" value="ECO:0007669"/>
    <property type="project" value="TreeGrafter"/>
</dbReference>
<dbReference type="GO" id="GO:0003872">
    <property type="term" value="F:6-phosphofructokinase activity"/>
    <property type="evidence" value="ECO:0007669"/>
    <property type="project" value="UniProtKB-UniRule"/>
</dbReference>
<dbReference type="GO" id="GO:0016208">
    <property type="term" value="F:AMP binding"/>
    <property type="evidence" value="ECO:0007669"/>
    <property type="project" value="TreeGrafter"/>
</dbReference>
<dbReference type="GO" id="GO:0005524">
    <property type="term" value="F:ATP binding"/>
    <property type="evidence" value="ECO:0007669"/>
    <property type="project" value="UniProtKB-KW"/>
</dbReference>
<dbReference type="GO" id="GO:0070095">
    <property type="term" value="F:fructose-6-phosphate binding"/>
    <property type="evidence" value="ECO:0007669"/>
    <property type="project" value="TreeGrafter"/>
</dbReference>
<dbReference type="GO" id="GO:0042802">
    <property type="term" value="F:identical protein binding"/>
    <property type="evidence" value="ECO:0007669"/>
    <property type="project" value="TreeGrafter"/>
</dbReference>
<dbReference type="GO" id="GO:0046872">
    <property type="term" value="F:metal ion binding"/>
    <property type="evidence" value="ECO:0007669"/>
    <property type="project" value="UniProtKB-KW"/>
</dbReference>
<dbReference type="GO" id="GO:0048029">
    <property type="term" value="F:monosaccharide binding"/>
    <property type="evidence" value="ECO:0007669"/>
    <property type="project" value="TreeGrafter"/>
</dbReference>
<dbReference type="GO" id="GO:0061621">
    <property type="term" value="P:canonical glycolysis"/>
    <property type="evidence" value="ECO:0007669"/>
    <property type="project" value="TreeGrafter"/>
</dbReference>
<dbReference type="GO" id="GO:0030388">
    <property type="term" value="P:fructose 1,6-bisphosphate metabolic process"/>
    <property type="evidence" value="ECO:0007669"/>
    <property type="project" value="TreeGrafter"/>
</dbReference>
<dbReference type="GO" id="GO:0006002">
    <property type="term" value="P:fructose 6-phosphate metabolic process"/>
    <property type="evidence" value="ECO:0007669"/>
    <property type="project" value="InterPro"/>
</dbReference>
<dbReference type="CDD" id="cd00763">
    <property type="entry name" value="Bacterial_PFK"/>
    <property type="match status" value="1"/>
</dbReference>
<dbReference type="FunFam" id="3.40.50.450:FF:000001">
    <property type="entry name" value="ATP-dependent 6-phosphofructokinase"/>
    <property type="match status" value="1"/>
</dbReference>
<dbReference type="FunFam" id="3.40.50.460:FF:000002">
    <property type="entry name" value="ATP-dependent 6-phosphofructokinase"/>
    <property type="match status" value="1"/>
</dbReference>
<dbReference type="Gene3D" id="3.40.50.450">
    <property type="match status" value="1"/>
</dbReference>
<dbReference type="Gene3D" id="3.40.50.460">
    <property type="entry name" value="Phosphofructokinase domain"/>
    <property type="match status" value="1"/>
</dbReference>
<dbReference type="HAMAP" id="MF_00339">
    <property type="entry name" value="Phosphofructokinase_I_B1"/>
    <property type="match status" value="1"/>
</dbReference>
<dbReference type="InterPro" id="IPR022953">
    <property type="entry name" value="ATP_PFK"/>
</dbReference>
<dbReference type="InterPro" id="IPR012003">
    <property type="entry name" value="ATP_PFK_prok-type"/>
</dbReference>
<dbReference type="InterPro" id="IPR012828">
    <property type="entry name" value="PFKA_ATP_prok"/>
</dbReference>
<dbReference type="InterPro" id="IPR015912">
    <property type="entry name" value="Phosphofructokinase_CS"/>
</dbReference>
<dbReference type="InterPro" id="IPR000023">
    <property type="entry name" value="Phosphofructokinase_dom"/>
</dbReference>
<dbReference type="InterPro" id="IPR035966">
    <property type="entry name" value="PKF_sf"/>
</dbReference>
<dbReference type="NCBIfam" id="TIGR02482">
    <property type="entry name" value="PFKA_ATP"/>
    <property type="match status" value="1"/>
</dbReference>
<dbReference type="NCBIfam" id="NF002872">
    <property type="entry name" value="PRK03202.1"/>
    <property type="match status" value="1"/>
</dbReference>
<dbReference type="PANTHER" id="PTHR13697:SF4">
    <property type="entry name" value="ATP-DEPENDENT 6-PHOSPHOFRUCTOKINASE"/>
    <property type="match status" value="1"/>
</dbReference>
<dbReference type="PANTHER" id="PTHR13697">
    <property type="entry name" value="PHOSPHOFRUCTOKINASE"/>
    <property type="match status" value="1"/>
</dbReference>
<dbReference type="Pfam" id="PF00365">
    <property type="entry name" value="PFK"/>
    <property type="match status" value="1"/>
</dbReference>
<dbReference type="PIRSF" id="PIRSF000532">
    <property type="entry name" value="ATP_PFK_prok"/>
    <property type="match status" value="1"/>
</dbReference>
<dbReference type="PRINTS" id="PR00476">
    <property type="entry name" value="PHFRCTKINASE"/>
</dbReference>
<dbReference type="SUPFAM" id="SSF53784">
    <property type="entry name" value="Phosphofructokinase"/>
    <property type="match status" value="1"/>
</dbReference>
<dbReference type="PROSITE" id="PS00433">
    <property type="entry name" value="PHOSPHOFRUCTOKINASE"/>
    <property type="match status" value="1"/>
</dbReference>
<protein>
    <recommendedName>
        <fullName evidence="1">ATP-dependent 6-phosphofructokinase</fullName>
        <shortName evidence="1">ATP-PFK</shortName>
        <shortName evidence="1">Phosphofructokinase</shortName>
        <ecNumber evidence="1">2.7.1.11</ecNumber>
    </recommendedName>
    <alternativeName>
        <fullName evidence="1">Phosphohexokinase</fullName>
    </alternativeName>
</protein>
<sequence>MKRIGVLTSGGDSPGMNAAIRSVVRKAIYHGVEVYGVYHGYAGLIAGNIKKLEVGDVGDIIHRGGTILYTARCPEFKTEEGQKKGIEQLKKHGIEGLVVIGGDGSYQGAKKLTEHGFPCVGVPGTIDNDIPGTDFTIGFDTALNTVIDAIDKIRDTATSHERTYVIEVMGRHAGDIALWSGLAGGAETILIPEADYDMNDVIARLKRGHERGKKHSIIIVAEGVGSGVDFGRQIQEATGFETRVTVLGHVQRGGSPTAFDRVLASRLGARAVELLLEGKGGRCVGIQNNQLVDHDIAEALANKHTIDQRMYALSKELSI</sequence>
<accession>P00512</accession>
<reference key="1">
    <citation type="journal article" date="1987" name="Gene">
        <title>Nucleotide sequence of the phosphofructokinase gene from Bacillus stearothermophilus and comparison with the homologous Escherichia coli gene.</title>
        <authorList>
            <person name="French B.A."/>
            <person name="Chang S.H."/>
        </authorList>
    </citation>
    <scope>NUCLEOTIDE SEQUENCE [GENOMIC DNA]</scope>
</reference>
<reference key="2">
    <citation type="journal article" date="1980" name="Eur. J. Biochem.">
        <title>Phosphofructokinase: complete amino-acid sequence of the enzyme from Bacillus stearothermophilus.</title>
        <authorList>
            <person name="Kolb E."/>
            <person name="Hudson P.J."/>
            <person name="Harris J.I."/>
        </authorList>
    </citation>
    <scope>PROTEIN SEQUENCE</scope>
</reference>
<reference key="3">
    <citation type="journal article" date="1993" name="Eur. J. Biochem.">
        <title>Molecular cloning and nucleotide sequence of the gene for pyruvate kinase of Bacillus stearothermophilus and the production of the enzyme in Escherichia coli. Evidence that the genes for phosphofructokinase and pyruvate kinase constitute an operon.</title>
        <authorList>
            <person name="Sakai H."/>
            <person name="Ohta T."/>
        </authorList>
    </citation>
    <scope>NUCLEOTIDE SEQUENCE [GENOMIC DNA] OF 300-319</scope>
</reference>
<reference key="4">
    <citation type="journal article" date="1994" name="Biochemistry">
        <title>Kinetic characteristics of phosphofructokinase from Bacillus stearothermophilus: MgATP nonallosterically inhibits the enzyme.</title>
        <authorList>
            <person name="Byrnes M."/>
            <person name="Zhu X."/>
            <person name="Younathan E.S."/>
            <person name="Chang S.H."/>
        </authorList>
    </citation>
    <scope>FUNCTION</scope>
    <scope>CATALYTIC ACTIVITY</scope>
    <scope>BIOPHYSICOCHEMICAL PROPERTIES</scope>
</reference>
<reference key="5">
    <citation type="journal article" date="1979" name="Nature">
        <title>Structure and control of phosphofructokinase from Bacillus stearothermophilus.</title>
        <authorList>
            <person name="Evans P.R."/>
            <person name="Hudson P.J."/>
        </authorList>
    </citation>
    <scope>X-RAY CRYSTALLOGRAPHY (2.4 ANGSTROMS)</scope>
</reference>
<reference key="6">
    <citation type="journal article" date="1981" name="Philos. Trans. R. Soc. Lond., B, Biol. Sci.">
        <title>Phosphofructokinase: structure and control.</title>
        <authorList>
            <person name="Evans P.R."/>
            <person name="Farrants G.W."/>
            <person name="Hudson P.J."/>
        </authorList>
    </citation>
    <scope>X-RAY CRYSTALLOGRAPHY (2.4 ANGSTROMS) IN COMPLEX WITH MAGNESIUM; ADP AND FRUCTOSE-6-PHOSPHATE</scope>
</reference>
<reference key="7">
    <citation type="journal article" date="1990" name="Nature">
        <title>Structural basis of the allosteric behaviour of phosphofructokinase.</title>
        <authorList>
            <person name="Schirmer T."/>
            <person name="Evans P.R."/>
        </authorList>
    </citation>
    <scope>X-RAY CRYSTALLOGRAPHY (2.6 ANGSTROMS) IN COMPLEX WITH ALLOSTERIC INHIBITOR</scope>
</reference>
<reference key="8">
    <citation type="journal article" date="2002" name="Biochemistry">
        <title>Reversible ligand-induced dissociation of a tryptophan-shift mutant of phosphofructokinase from Bacillus stearothermophilus.</title>
        <authorList>
            <person name="Riley-Lovingshimer M.R."/>
            <person name="Ronning D.R."/>
            <person name="Sacchettini J.C."/>
            <person name="Reinhart G.D."/>
        </authorList>
    </citation>
    <scope>X-RAY CRYSTALLOGRAPHY (3.2 ANGSTROMS) IN COMPLEX WITH FRUCTOSE-6-PHOSPHATE</scope>
</reference>
<reference key="9">
    <citation type="journal article" date="2012" name="Biochemistry">
        <title>Structure of the apo form of Bacillus stearothermophilus phosphofructokinase.</title>
        <authorList>
            <person name="Mosser R."/>
            <person name="Reddy M.C."/>
            <person name="Bruning J.B."/>
            <person name="Sacchettini J.C."/>
            <person name="Reinhart G.D."/>
        </authorList>
    </citation>
    <scope>X-RAY CRYSTALLOGRAPHY (2.79 ANGSTROMS)</scope>
</reference>
<reference key="10">
    <citation type="journal article" date="2013" name="Biochemistry">
        <title>Redefining the role of the quaternary shift in Bacillus stearothermophilus phosphofructokinase.</title>
        <authorList>
            <person name="Mosser R."/>
            <person name="Reddy M.C."/>
            <person name="Bruning J.B."/>
            <person name="Sacchettini J.C."/>
            <person name="Reinhart G.D."/>
        </authorList>
    </citation>
    <scope>X-RAY CRYSTALLOGRAPHY (2.00 ANGSTROMS) IN COMPLEX WITH PHOSPHOENOLPYRUVIC ACID</scope>
</reference>
<comment type="function">
    <text evidence="1 6">Catalyzes the phosphorylation of D-fructose 6-phosphate to fructose 1,6-bisphosphate by ATP, the first committing step of glycolysis.</text>
</comment>
<comment type="catalytic activity">
    <reaction evidence="1 6">
        <text>beta-D-fructose 6-phosphate + ATP = beta-D-fructose 1,6-bisphosphate + ADP + H(+)</text>
        <dbReference type="Rhea" id="RHEA:16109"/>
        <dbReference type="ChEBI" id="CHEBI:15378"/>
        <dbReference type="ChEBI" id="CHEBI:30616"/>
        <dbReference type="ChEBI" id="CHEBI:32966"/>
        <dbReference type="ChEBI" id="CHEBI:57634"/>
        <dbReference type="ChEBI" id="CHEBI:456216"/>
        <dbReference type="EC" id="2.7.1.11"/>
    </reaction>
</comment>
<comment type="cofactor">
    <cofactor evidence="1 5">
        <name>Mg(2+)</name>
        <dbReference type="ChEBI" id="CHEBI:18420"/>
    </cofactor>
</comment>
<comment type="activity regulation">
    <text evidence="1 3 4 9">Allosterically activated by ADP and other diphosphonucleosides, and allosterically inhibited by phosphoenolpyruvate.</text>
</comment>
<comment type="biophysicochemical properties">
    <kinetics>
        <KM evidence="6">0.07 mM for ATP</KM>
        <KM evidence="6">0.033 mM for fructose 6-phosphate</KM>
    </kinetics>
</comment>
<comment type="pathway">
    <text evidence="1">Carbohydrate degradation; glycolysis; D-glyceraldehyde 3-phosphate and glycerone phosphate from D-glucose: step 3/4.</text>
</comment>
<comment type="subunit">
    <text evidence="1 2 3 4 5">Homotetramer.</text>
</comment>
<comment type="subcellular location">
    <subcellularLocation>
        <location evidence="1">Cytoplasm</location>
    </subcellularLocation>
</comment>
<comment type="miscellaneous">
    <text evidence="8">In the R state the 6-P group of fructose 6-phosphate (F6P) is bound by His-249 from one chain and Arg-162 and Arg-243 from an adjacent chain. In the T state a conformation change moves Arg-162 away from the substrate. Glu-161 takes its place, hence repelling the phosphate of ATP.</text>
</comment>
<comment type="similarity">
    <text evidence="1">Belongs to the phosphofructokinase type A (PFKA) family. ATP-dependent PFK group I subfamily. Prokaryotic clade 'B1' sub-subfamily.</text>
</comment>
<gene>
    <name evidence="1" type="primary">pfkA</name>
    <name type="synonym">pfk</name>
</gene>
<keyword id="KW-0002">3D-structure</keyword>
<keyword id="KW-0021">Allosteric enzyme</keyword>
<keyword id="KW-0067">ATP-binding</keyword>
<keyword id="KW-0963">Cytoplasm</keyword>
<keyword id="KW-0903">Direct protein sequencing</keyword>
<keyword id="KW-0324">Glycolysis</keyword>
<keyword id="KW-0418">Kinase</keyword>
<keyword id="KW-0460">Magnesium</keyword>
<keyword id="KW-0479">Metal-binding</keyword>
<keyword id="KW-0547">Nucleotide-binding</keyword>
<keyword id="KW-0808">Transferase</keyword>